<feature type="chain" id="PRO_1000077085" description="tRNA pseudouridine synthase A">
    <location>
        <begin position="1"/>
        <end position="278"/>
    </location>
</feature>
<feature type="region of interest" description="Disordered" evidence="2">
    <location>
        <begin position="259"/>
        <end position="278"/>
    </location>
</feature>
<feature type="compositionally biased region" description="Polar residues" evidence="2">
    <location>
        <begin position="261"/>
        <end position="278"/>
    </location>
</feature>
<feature type="active site" description="Nucleophile" evidence="1">
    <location>
        <position position="52"/>
    </location>
</feature>
<feature type="binding site" evidence="1">
    <location>
        <position position="110"/>
    </location>
    <ligand>
        <name>substrate</name>
    </ligand>
</feature>
<gene>
    <name evidence="1" type="primary">truA</name>
    <name type="ordered locus">Caur_2398</name>
</gene>
<proteinExistence type="inferred from homology"/>
<sequence length="278" mass="31003">MRTIALLLAYDGTDFAGSQWQTDIRTVQGALESAWEALTQERRRIVLAGRTDAGVHATGQVAHVQTTTRHNLQTIWRGLNAHLPVDLAIQNVGEAVPDFHARFSAIQREYRYLIDCAAAPLPQLRHQVLHYAGTLDVAAMTAALKLLEGTHDFAAFTTATPAQRSTVRTMYWTRVGDYEWFERRLLAIEVAANAFLQHMVRMIVGTLLLVGRGRMTVDQFGEVLASRDRRLAGPTAPAHGLTLTAVRYPPGLIRWVEPSKRQNGTTKVEQPSSYVHEE</sequence>
<evidence type="ECO:0000255" key="1">
    <source>
        <dbReference type="HAMAP-Rule" id="MF_00171"/>
    </source>
</evidence>
<evidence type="ECO:0000256" key="2">
    <source>
        <dbReference type="SAM" id="MobiDB-lite"/>
    </source>
</evidence>
<name>TRUA_CHLAA</name>
<dbReference type="EC" id="5.4.99.12" evidence="1"/>
<dbReference type="EMBL" id="CP000909">
    <property type="protein sequence ID" value="ABY35607.1"/>
    <property type="molecule type" value="Genomic_DNA"/>
</dbReference>
<dbReference type="RefSeq" id="WP_012258260.1">
    <property type="nucleotide sequence ID" value="NC_010175.1"/>
</dbReference>
<dbReference type="RefSeq" id="YP_001635996.1">
    <property type="nucleotide sequence ID" value="NC_010175.1"/>
</dbReference>
<dbReference type="SMR" id="A9WH95"/>
<dbReference type="FunCoup" id="A9WH95">
    <property type="interactions" value="478"/>
</dbReference>
<dbReference type="STRING" id="324602.Caur_2398"/>
<dbReference type="EnsemblBacteria" id="ABY35607">
    <property type="protein sequence ID" value="ABY35607"/>
    <property type="gene ID" value="Caur_2398"/>
</dbReference>
<dbReference type="KEGG" id="cau:Caur_2398"/>
<dbReference type="PATRIC" id="fig|324602.8.peg.2712"/>
<dbReference type="eggNOG" id="COG0101">
    <property type="taxonomic scope" value="Bacteria"/>
</dbReference>
<dbReference type="HOGENOM" id="CLU_014673_0_1_0"/>
<dbReference type="InParanoid" id="A9WH95"/>
<dbReference type="Proteomes" id="UP000002008">
    <property type="component" value="Chromosome"/>
</dbReference>
<dbReference type="GO" id="GO:0009982">
    <property type="term" value="F:pseudouridine synthase activity"/>
    <property type="evidence" value="ECO:0000318"/>
    <property type="project" value="GO_Central"/>
</dbReference>
<dbReference type="GO" id="GO:0003723">
    <property type="term" value="F:RNA binding"/>
    <property type="evidence" value="ECO:0007669"/>
    <property type="project" value="InterPro"/>
</dbReference>
<dbReference type="GO" id="GO:0160147">
    <property type="term" value="F:tRNA pseudouridine(38-40) synthase activity"/>
    <property type="evidence" value="ECO:0007669"/>
    <property type="project" value="UniProtKB-EC"/>
</dbReference>
<dbReference type="GO" id="GO:0031119">
    <property type="term" value="P:tRNA pseudouridine synthesis"/>
    <property type="evidence" value="ECO:0000318"/>
    <property type="project" value="GO_Central"/>
</dbReference>
<dbReference type="CDD" id="cd02570">
    <property type="entry name" value="PseudoU_synth_EcTruA"/>
    <property type="match status" value="1"/>
</dbReference>
<dbReference type="FunFam" id="3.30.70.580:FF:000001">
    <property type="entry name" value="tRNA pseudouridine synthase A"/>
    <property type="match status" value="1"/>
</dbReference>
<dbReference type="Gene3D" id="3.30.70.660">
    <property type="entry name" value="Pseudouridine synthase I, catalytic domain, C-terminal subdomain"/>
    <property type="match status" value="1"/>
</dbReference>
<dbReference type="Gene3D" id="3.30.70.580">
    <property type="entry name" value="Pseudouridine synthase I, catalytic domain, N-terminal subdomain"/>
    <property type="match status" value="1"/>
</dbReference>
<dbReference type="HAMAP" id="MF_00171">
    <property type="entry name" value="TruA"/>
    <property type="match status" value="1"/>
</dbReference>
<dbReference type="InterPro" id="IPR020103">
    <property type="entry name" value="PsdUridine_synth_cat_dom_sf"/>
</dbReference>
<dbReference type="InterPro" id="IPR001406">
    <property type="entry name" value="PsdUridine_synth_TruA"/>
</dbReference>
<dbReference type="InterPro" id="IPR020097">
    <property type="entry name" value="PsdUridine_synth_TruA_a/b_dom"/>
</dbReference>
<dbReference type="InterPro" id="IPR020095">
    <property type="entry name" value="PsdUridine_synth_TruA_C"/>
</dbReference>
<dbReference type="InterPro" id="IPR020094">
    <property type="entry name" value="TruA/RsuA/RluB/E/F_N"/>
</dbReference>
<dbReference type="NCBIfam" id="TIGR00071">
    <property type="entry name" value="hisT_truA"/>
    <property type="match status" value="1"/>
</dbReference>
<dbReference type="PANTHER" id="PTHR11142">
    <property type="entry name" value="PSEUDOURIDYLATE SYNTHASE"/>
    <property type="match status" value="1"/>
</dbReference>
<dbReference type="PANTHER" id="PTHR11142:SF0">
    <property type="entry name" value="TRNA PSEUDOURIDINE SYNTHASE-LIKE 1"/>
    <property type="match status" value="1"/>
</dbReference>
<dbReference type="Pfam" id="PF01416">
    <property type="entry name" value="PseudoU_synth_1"/>
    <property type="match status" value="2"/>
</dbReference>
<dbReference type="PIRSF" id="PIRSF001430">
    <property type="entry name" value="tRNA_psdUrid_synth"/>
    <property type="match status" value="1"/>
</dbReference>
<dbReference type="SUPFAM" id="SSF55120">
    <property type="entry name" value="Pseudouridine synthase"/>
    <property type="match status" value="1"/>
</dbReference>
<accession>A9WH95</accession>
<comment type="function">
    <text evidence="1">Formation of pseudouridine at positions 38, 39 and 40 in the anticodon stem and loop of transfer RNAs.</text>
</comment>
<comment type="catalytic activity">
    <reaction evidence="1">
        <text>uridine(38/39/40) in tRNA = pseudouridine(38/39/40) in tRNA</text>
        <dbReference type="Rhea" id="RHEA:22376"/>
        <dbReference type="Rhea" id="RHEA-COMP:10085"/>
        <dbReference type="Rhea" id="RHEA-COMP:10087"/>
        <dbReference type="ChEBI" id="CHEBI:65314"/>
        <dbReference type="ChEBI" id="CHEBI:65315"/>
        <dbReference type="EC" id="5.4.99.12"/>
    </reaction>
</comment>
<comment type="subunit">
    <text evidence="1">Homodimer.</text>
</comment>
<comment type="similarity">
    <text evidence="1">Belongs to the tRNA pseudouridine synthase TruA family.</text>
</comment>
<reference key="1">
    <citation type="journal article" date="2011" name="BMC Genomics">
        <title>Complete genome sequence of the filamentous anoxygenic phototrophic bacterium Chloroflexus aurantiacus.</title>
        <authorList>
            <person name="Tang K.H."/>
            <person name="Barry K."/>
            <person name="Chertkov O."/>
            <person name="Dalin E."/>
            <person name="Han C.S."/>
            <person name="Hauser L.J."/>
            <person name="Honchak B.M."/>
            <person name="Karbach L.E."/>
            <person name="Land M.L."/>
            <person name="Lapidus A."/>
            <person name="Larimer F.W."/>
            <person name="Mikhailova N."/>
            <person name="Pitluck S."/>
            <person name="Pierson B.K."/>
            <person name="Blankenship R.E."/>
        </authorList>
    </citation>
    <scope>NUCLEOTIDE SEQUENCE [LARGE SCALE GENOMIC DNA]</scope>
    <source>
        <strain>ATCC 29366 / DSM 635 / J-10-fl</strain>
    </source>
</reference>
<keyword id="KW-0413">Isomerase</keyword>
<keyword id="KW-1185">Reference proteome</keyword>
<keyword id="KW-0819">tRNA processing</keyword>
<protein>
    <recommendedName>
        <fullName evidence="1">tRNA pseudouridine synthase A</fullName>
        <ecNumber evidence="1">5.4.99.12</ecNumber>
    </recommendedName>
    <alternativeName>
        <fullName evidence="1">tRNA pseudouridine(38-40) synthase</fullName>
    </alternativeName>
    <alternativeName>
        <fullName evidence="1">tRNA pseudouridylate synthase I</fullName>
    </alternativeName>
    <alternativeName>
        <fullName evidence="1">tRNA-uridine isomerase I</fullName>
    </alternativeName>
</protein>
<organism>
    <name type="scientific">Chloroflexus aurantiacus (strain ATCC 29366 / DSM 635 / J-10-fl)</name>
    <dbReference type="NCBI Taxonomy" id="324602"/>
    <lineage>
        <taxon>Bacteria</taxon>
        <taxon>Bacillati</taxon>
        <taxon>Chloroflexota</taxon>
        <taxon>Chloroflexia</taxon>
        <taxon>Chloroflexales</taxon>
        <taxon>Chloroflexineae</taxon>
        <taxon>Chloroflexaceae</taxon>
        <taxon>Chloroflexus</taxon>
    </lineage>
</organism>